<sequence>MSAPASSSAIAPSQPTAPGHARHSASWSASASDPSGATCAVAPCTSLTPPRTRFDASQLQAHLSSTLAARLRNASWDKSDKDKNRALSRSIAEVIKLKMLEIEPKGFKFIVQVQLVENLGQGGSRPGVSLARHGQCCTGHVFE</sequence>
<reference key="1">
    <citation type="journal article" date="2006" name="Nature">
        <title>Insights from the genome of the biotrophic fungal plant pathogen Ustilago maydis.</title>
        <authorList>
            <person name="Kaemper J."/>
            <person name="Kahmann R."/>
            <person name="Boelker M."/>
            <person name="Ma L.-J."/>
            <person name="Brefort T."/>
            <person name="Saville B.J."/>
            <person name="Banuett F."/>
            <person name="Kronstad J.W."/>
            <person name="Gold S.E."/>
            <person name="Mueller O."/>
            <person name="Perlin M.H."/>
            <person name="Woesten H.A.B."/>
            <person name="de Vries R."/>
            <person name="Ruiz-Herrera J."/>
            <person name="Reynaga-Pena C.G."/>
            <person name="Snetselaar K."/>
            <person name="McCann M."/>
            <person name="Perez-Martin J."/>
            <person name="Feldbruegge M."/>
            <person name="Basse C.W."/>
            <person name="Steinberg G."/>
            <person name="Ibeas J.I."/>
            <person name="Holloman W."/>
            <person name="Guzman P."/>
            <person name="Farman M.L."/>
            <person name="Stajich J.E."/>
            <person name="Sentandreu R."/>
            <person name="Gonzalez-Prieto J.M."/>
            <person name="Kennell J.C."/>
            <person name="Molina L."/>
            <person name="Schirawski J."/>
            <person name="Mendoza-Mendoza A."/>
            <person name="Greilinger D."/>
            <person name="Muench K."/>
            <person name="Roessel N."/>
            <person name="Scherer M."/>
            <person name="Vranes M."/>
            <person name="Ladendorf O."/>
            <person name="Vincon V."/>
            <person name="Fuchs U."/>
            <person name="Sandrock B."/>
            <person name="Meng S."/>
            <person name="Ho E.C.H."/>
            <person name="Cahill M.J."/>
            <person name="Boyce K.J."/>
            <person name="Klose J."/>
            <person name="Klosterman S.J."/>
            <person name="Deelstra H.J."/>
            <person name="Ortiz-Castellanos L."/>
            <person name="Li W."/>
            <person name="Sanchez-Alonso P."/>
            <person name="Schreier P.H."/>
            <person name="Haeuser-Hahn I."/>
            <person name="Vaupel M."/>
            <person name="Koopmann E."/>
            <person name="Friedrich G."/>
            <person name="Voss H."/>
            <person name="Schlueter T."/>
            <person name="Margolis J."/>
            <person name="Platt D."/>
            <person name="Swimmer C."/>
            <person name="Gnirke A."/>
            <person name="Chen F."/>
            <person name="Vysotskaia V."/>
            <person name="Mannhaupt G."/>
            <person name="Gueldener U."/>
            <person name="Muensterkoetter M."/>
            <person name="Haase D."/>
            <person name="Oesterheld M."/>
            <person name="Mewes H.-W."/>
            <person name="Mauceli E.W."/>
            <person name="DeCaprio D."/>
            <person name="Wade C.M."/>
            <person name="Butler J."/>
            <person name="Young S.K."/>
            <person name="Jaffe D.B."/>
            <person name="Calvo S.E."/>
            <person name="Nusbaum C."/>
            <person name="Galagan J.E."/>
            <person name="Birren B.W."/>
        </authorList>
    </citation>
    <scope>NUCLEOTIDE SEQUENCE [LARGE SCALE GENOMIC DNA]</scope>
    <source>
        <strain>DSM 14603 / FGSC 9021 / UM521</strain>
    </source>
</reference>
<reference key="2">
    <citation type="submission" date="2014-09" db="EMBL/GenBank/DDBJ databases">
        <authorList>
            <person name="Gueldener U."/>
            <person name="Muensterkoetter M."/>
            <person name="Walter M.C."/>
            <person name="Mannhaupt G."/>
            <person name="Kahmann R."/>
        </authorList>
    </citation>
    <scope>GENOME REANNOTATION</scope>
    <source>
        <strain>DSM 14603 / FGSC 9021 / UM521</strain>
    </source>
</reference>
<proteinExistence type="inferred from homology"/>
<accession>P0CT25</accession>
<accession>A0A0D1DT52</accession>
<accession>Q4P0B9</accession>
<dbReference type="EMBL" id="CM003162">
    <property type="protein sequence ID" value="KIS65740.1"/>
    <property type="molecule type" value="Genomic_DNA"/>
</dbReference>
<dbReference type="RefSeq" id="XP_011392754.1">
    <property type="nucleotide sequence ID" value="XM_011394452.1"/>
</dbReference>
<dbReference type="SMR" id="P0CT25"/>
<dbReference type="STRING" id="237631.P0CT25"/>
<dbReference type="EnsemblFungi" id="KIS65740">
    <property type="protein sequence ID" value="KIS65740"/>
    <property type="gene ID" value="UMAG_12046"/>
</dbReference>
<dbReference type="GeneID" id="23567832"/>
<dbReference type="KEGG" id="uma:UMAG_12046"/>
<dbReference type="VEuPathDB" id="FungiDB:UMAG_12046"/>
<dbReference type="InParanoid" id="P0CT25"/>
<dbReference type="OrthoDB" id="10260741at2759"/>
<dbReference type="Proteomes" id="UP000000561">
    <property type="component" value="Chromosome 23"/>
</dbReference>
<dbReference type="Gene3D" id="3.30.1140.40">
    <property type="entry name" value="Tctex-1"/>
    <property type="match status" value="1"/>
</dbReference>
<dbReference type="InterPro" id="IPR005334">
    <property type="entry name" value="Tctex-1-like"/>
</dbReference>
<dbReference type="InterPro" id="IPR038586">
    <property type="entry name" value="Tctex-1-like_sf"/>
</dbReference>
<dbReference type="Pfam" id="PF03645">
    <property type="entry name" value="Tctex-1"/>
    <property type="match status" value="1"/>
</dbReference>
<gene>
    <name type="ORF">UMAG_12046</name>
</gene>
<feature type="chain" id="PRO_0000423829" description="Uncharacterized protein UM12046">
    <location>
        <begin position="1"/>
        <end position="143"/>
    </location>
</feature>
<feature type="region of interest" description="Disordered" evidence="1">
    <location>
        <begin position="1"/>
        <end position="37"/>
    </location>
</feature>
<keyword id="KW-1185">Reference proteome</keyword>
<protein>
    <recommendedName>
        <fullName>Uncharacterized protein UM12046</fullName>
    </recommendedName>
</protein>
<name>YU046_MYCMD</name>
<comment type="similarity">
    <text evidence="2">Belongs to the dynein light chain Tctex-type family.</text>
</comment>
<organism>
    <name type="scientific">Mycosarcoma maydis</name>
    <name type="common">Corn smut fungus</name>
    <name type="synonym">Ustilago maydis</name>
    <dbReference type="NCBI Taxonomy" id="5270"/>
    <lineage>
        <taxon>Eukaryota</taxon>
        <taxon>Fungi</taxon>
        <taxon>Dikarya</taxon>
        <taxon>Basidiomycota</taxon>
        <taxon>Ustilaginomycotina</taxon>
        <taxon>Ustilaginomycetes</taxon>
        <taxon>Ustilaginales</taxon>
        <taxon>Ustilaginaceae</taxon>
        <taxon>Mycosarcoma</taxon>
    </lineage>
</organism>
<evidence type="ECO:0000256" key="1">
    <source>
        <dbReference type="SAM" id="MobiDB-lite"/>
    </source>
</evidence>
<evidence type="ECO:0000305" key="2"/>